<feature type="chain" id="PRO_0000188449" description="Glycerol-3-phosphate acyltransferase">
    <location>
        <begin position="1"/>
        <end position="202"/>
    </location>
</feature>
<feature type="transmembrane region" description="Helical" evidence="1">
    <location>
        <begin position="2"/>
        <end position="22"/>
    </location>
</feature>
<feature type="transmembrane region" description="Helical" evidence="1">
    <location>
        <begin position="54"/>
        <end position="74"/>
    </location>
</feature>
<feature type="transmembrane region" description="Helical" evidence="1">
    <location>
        <begin position="85"/>
        <end position="105"/>
    </location>
</feature>
<feature type="transmembrane region" description="Helical" evidence="1">
    <location>
        <begin position="120"/>
        <end position="140"/>
    </location>
</feature>
<feature type="transmembrane region" description="Helical" evidence="1">
    <location>
        <begin position="141"/>
        <end position="161"/>
    </location>
</feature>
<feature type="transmembrane region" description="Helical" evidence="1">
    <location>
        <begin position="162"/>
        <end position="182"/>
    </location>
</feature>
<proteinExistence type="inferred from homology"/>
<dbReference type="EC" id="2.3.1.275" evidence="1"/>
<dbReference type="EMBL" id="CP000046">
    <property type="protein sequence ID" value="AAW36637.1"/>
    <property type="molecule type" value="Genomic_DNA"/>
</dbReference>
<dbReference type="RefSeq" id="WP_000972781.1">
    <property type="nucleotide sequence ID" value="NZ_JBGOFO010000003.1"/>
</dbReference>
<dbReference type="SMR" id="Q5HG66"/>
<dbReference type="KEGG" id="sac:SACOL1388"/>
<dbReference type="HOGENOM" id="CLU_081254_4_0_9"/>
<dbReference type="UniPathway" id="UPA00085"/>
<dbReference type="Proteomes" id="UP000000530">
    <property type="component" value="Chromosome"/>
</dbReference>
<dbReference type="GO" id="GO:0005886">
    <property type="term" value="C:plasma membrane"/>
    <property type="evidence" value="ECO:0007669"/>
    <property type="project" value="UniProtKB-SubCell"/>
</dbReference>
<dbReference type="GO" id="GO:0043772">
    <property type="term" value="F:acyl-phosphate glycerol-3-phosphate acyltransferase activity"/>
    <property type="evidence" value="ECO:0007669"/>
    <property type="project" value="UniProtKB-UniRule"/>
</dbReference>
<dbReference type="GO" id="GO:0008654">
    <property type="term" value="P:phospholipid biosynthetic process"/>
    <property type="evidence" value="ECO:0007669"/>
    <property type="project" value="UniProtKB-UniRule"/>
</dbReference>
<dbReference type="HAMAP" id="MF_01043">
    <property type="entry name" value="PlsY"/>
    <property type="match status" value="1"/>
</dbReference>
<dbReference type="InterPro" id="IPR003811">
    <property type="entry name" value="G3P_acylTferase_PlsY"/>
</dbReference>
<dbReference type="NCBIfam" id="TIGR00023">
    <property type="entry name" value="glycerol-3-phosphate 1-O-acyltransferase PlsY"/>
    <property type="match status" value="1"/>
</dbReference>
<dbReference type="PANTHER" id="PTHR30309:SF0">
    <property type="entry name" value="GLYCEROL-3-PHOSPHATE ACYLTRANSFERASE-RELATED"/>
    <property type="match status" value="1"/>
</dbReference>
<dbReference type="PANTHER" id="PTHR30309">
    <property type="entry name" value="INNER MEMBRANE PROTEIN YGIH"/>
    <property type="match status" value="1"/>
</dbReference>
<dbReference type="Pfam" id="PF02660">
    <property type="entry name" value="G3P_acyltransf"/>
    <property type="match status" value="1"/>
</dbReference>
<dbReference type="SMART" id="SM01207">
    <property type="entry name" value="G3P_acyltransf"/>
    <property type="match status" value="1"/>
</dbReference>
<name>PLSY_STAAC</name>
<accession>Q5HG66</accession>
<protein>
    <recommendedName>
        <fullName evidence="1">Glycerol-3-phosphate acyltransferase</fullName>
    </recommendedName>
    <alternativeName>
        <fullName evidence="1">Acyl-PO4 G3P acyltransferase</fullName>
    </alternativeName>
    <alternativeName>
        <fullName evidence="1">Acyl-phosphate--glycerol-3-phosphate acyltransferase</fullName>
    </alternativeName>
    <alternativeName>
        <fullName evidence="1">G3P acyltransferase</fullName>
        <shortName evidence="1">GPAT</shortName>
        <ecNumber evidence="1">2.3.1.275</ecNumber>
    </alternativeName>
    <alternativeName>
        <fullName evidence="1">Lysophosphatidic acid synthase</fullName>
        <shortName evidence="1">LPA synthase</shortName>
    </alternativeName>
</protein>
<comment type="function">
    <text evidence="1">Catalyzes the transfer of an acyl group from acyl-phosphate (acyl-PO(4)) to glycerol-3-phosphate (G3P) to form lysophosphatidic acid (LPA). This enzyme utilizes acyl-phosphate as fatty acyl donor, but not acyl-CoA or acyl-ACP.</text>
</comment>
<comment type="catalytic activity">
    <reaction evidence="1">
        <text>an acyl phosphate + sn-glycerol 3-phosphate = a 1-acyl-sn-glycero-3-phosphate + phosphate</text>
        <dbReference type="Rhea" id="RHEA:34075"/>
        <dbReference type="ChEBI" id="CHEBI:43474"/>
        <dbReference type="ChEBI" id="CHEBI:57597"/>
        <dbReference type="ChEBI" id="CHEBI:57970"/>
        <dbReference type="ChEBI" id="CHEBI:59918"/>
        <dbReference type="EC" id="2.3.1.275"/>
    </reaction>
</comment>
<comment type="pathway">
    <text evidence="1">Lipid metabolism; phospholipid metabolism.</text>
</comment>
<comment type="subunit">
    <text evidence="1">Probably interacts with PlsX.</text>
</comment>
<comment type="subcellular location">
    <subcellularLocation>
        <location evidence="1">Cell membrane</location>
        <topology evidence="1">Multi-pass membrane protein</topology>
    </subcellularLocation>
</comment>
<comment type="similarity">
    <text evidence="1">Belongs to the PlsY family.</text>
</comment>
<evidence type="ECO:0000255" key="1">
    <source>
        <dbReference type="HAMAP-Rule" id="MF_01043"/>
    </source>
</evidence>
<organism>
    <name type="scientific">Staphylococcus aureus (strain COL)</name>
    <dbReference type="NCBI Taxonomy" id="93062"/>
    <lineage>
        <taxon>Bacteria</taxon>
        <taxon>Bacillati</taxon>
        <taxon>Bacillota</taxon>
        <taxon>Bacilli</taxon>
        <taxon>Bacillales</taxon>
        <taxon>Staphylococcaceae</taxon>
        <taxon>Staphylococcus</taxon>
    </lineage>
</organism>
<reference key="1">
    <citation type="journal article" date="2005" name="J. Bacteriol.">
        <title>Insights on evolution of virulence and resistance from the complete genome analysis of an early methicillin-resistant Staphylococcus aureus strain and a biofilm-producing methicillin-resistant Staphylococcus epidermidis strain.</title>
        <authorList>
            <person name="Gill S.R."/>
            <person name="Fouts D.E."/>
            <person name="Archer G.L."/>
            <person name="Mongodin E.F."/>
            <person name="DeBoy R.T."/>
            <person name="Ravel J."/>
            <person name="Paulsen I.T."/>
            <person name="Kolonay J.F."/>
            <person name="Brinkac L.M."/>
            <person name="Beanan M.J."/>
            <person name="Dodson R.J."/>
            <person name="Daugherty S.C."/>
            <person name="Madupu R."/>
            <person name="Angiuoli S.V."/>
            <person name="Durkin A.S."/>
            <person name="Haft D.H."/>
            <person name="Vamathevan J.J."/>
            <person name="Khouri H."/>
            <person name="Utterback T.R."/>
            <person name="Lee C."/>
            <person name="Dimitrov G."/>
            <person name="Jiang L."/>
            <person name="Qin H."/>
            <person name="Weidman J."/>
            <person name="Tran K."/>
            <person name="Kang K.H."/>
            <person name="Hance I.R."/>
            <person name="Nelson K.E."/>
            <person name="Fraser C.M."/>
        </authorList>
    </citation>
    <scope>NUCLEOTIDE SEQUENCE [LARGE SCALE GENOMIC DNA]</scope>
    <source>
        <strain>COL</strain>
    </source>
</reference>
<sequence>MMIIVMLLLSYLIGAFPSGFVIGKLFFKKDIRQFGSGNTGATNSFRVLGRPAGFLVTFLDIFKGFITVFFPLWLQVHADGPISTFFTNGLIVGLFAILGHVYPVYLKFQGGKAVATSAGVVLGVNPILLLILAIIFFIVLKIFKYVSLASIVAAICCVIGSLIIQDYILLVVSFLVSIILIIRHRSNIARIFRGEEPKIKWM</sequence>
<gene>
    <name evidence="1" type="primary">plsY</name>
    <name type="ordered locus">SACOL1388</name>
</gene>
<keyword id="KW-1003">Cell membrane</keyword>
<keyword id="KW-0444">Lipid biosynthesis</keyword>
<keyword id="KW-0443">Lipid metabolism</keyword>
<keyword id="KW-0472">Membrane</keyword>
<keyword id="KW-0594">Phospholipid biosynthesis</keyword>
<keyword id="KW-1208">Phospholipid metabolism</keyword>
<keyword id="KW-0808">Transferase</keyword>
<keyword id="KW-0812">Transmembrane</keyword>
<keyword id="KW-1133">Transmembrane helix</keyword>